<keyword id="KW-1003">Cell membrane</keyword>
<keyword id="KW-1015">Disulfide bond</keyword>
<keyword id="KW-0297">G-protein coupled receptor</keyword>
<keyword id="KW-0325">Glycoprotein</keyword>
<keyword id="KW-0472">Membrane</keyword>
<keyword id="KW-0675">Receptor</keyword>
<keyword id="KW-1185">Reference proteome</keyword>
<keyword id="KW-0807">Transducer</keyword>
<keyword id="KW-0812">Transmembrane</keyword>
<keyword id="KW-1133">Transmembrane helix</keyword>
<organism>
    <name type="scientific">Gallus gallus</name>
    <name type="common">Chicken</name>
    <dbReference type="NCBI Taxonomy" id="9031"/>
    <lineage>
        <taxon>Eukaryota</taxon>
        <taxon>Metazoa</taxon>
        <taxon>Chordata</taxon>
        <taxon>Craniata</taxon>
        <taxon>Vertebrata</taxon>
        <taxon>Euteleostomi</taxon>
        <taxon>Archelosauria</taxon>
        <taxon>Archosauria</taxon>
        <taxon>Dinosauria</taxon>
        <taxon>Saurischia</taxon>
        <taxon>Theropoda</taxon>
        <taxon>Coelurosauria</taxon>
        <taxon>Aves</taxon>
        <taxon>Neognathae</taxon>
        <taxon>Galloanserae</taxon>
        <taxon>Galliformes</taxon>
        <taxon>Phasianidae</taxon>
        <taxon>Phasianinae</taxon>
        <taxon>Gallus</taxon>
    </lineage>
</organism>
<reference key="1">
    <citation type="journal article" date="2001" name="Mol. Cell. Neurosci.">
        <title>A novel 7-transmembrane receptor expressed in nerve growth factor-dependent sensory neurons.</title>
        <authorList>
            <person name="Friedel R.H."/>
            <person name="Stubbusch J."/>
            <person name="Barde Y.-A."/>
            <person name="Schnuerch H."/>
        </authorList>
    </citation>
    <scope>NUCLEOTIDE SEQUENCE [MRNA]</scope>
    <scope>DEVELOPMENTAL STAGE</scope>
    <source>
        <tissue>Spinal ganglion</tissue>
    </source>
</reference>
<gene>
    <name type="primary">GPR149</name>
    <name type="synonym">R35</name>
</gene>
<comment type="function">
    <text>Orphan receptor.</text>
</comment>
<comment type="subcellular location">
    <subcellularLocation>
        <location>Cell membrane</location>
        <topology>Multi-pass membrane protein</topology>
    </subcellularLocation>
</comment>
<comment type="tissue specificity">
    <text>Specific expression in peripheral nervous system, including nerve growth factor-dependent sensory and sympathetic neurons, as well as enteric neurons.</text>
</comment>
<comment type="developmental stage">
    <text evidence="4">Mostly restricted to cells of the nervous system. Expressed in NGF-dependent neurons of the PNS, but also found in subpopulations of CNS neurons, like spinal cord motoneurons, retinal ganglia cells and EGL cells of the cerebellum.</text>
</comment>
<comment type="similarity">
    <text evidence="2">Belongs to the G-protein coupled receptor 1 family.</text>
</comment>
<protein>
    <recommendedName>
        <fullName>Probable G-protein coupled receptor 149</fullName>
    </recommendedName>
    <alternativeName>
        <fullName>G-protein coupled receptor R35</fullName>
    </alternativeName>
</protein>
<proteinExistence type="evidence at transcript level"/>
<name>GP149_CHICK</name>
<accession>Q9DDD1</accession>
<evidence type="ECO:0000255" key="1"/>
<evidence type="ECO:0000255" key="2">
    <source>
        <dbReference type="PROSITE-ProRule" id="PRU00521"/>
    </source>
</evidence>
<evidence type="ECO:0000256" key="3">
    <source>
        <dbReference type="SAM" id="MobiDB-lite"/>
    </source>
</evidence>
<evidence type="ECO:0000269" key="4">
    <source>
    </source>
</evidence>
<dbReference type="EMBL" id="AJ293971">
    <property type="protein sequence ID" value="CAC21497.1"/>
    <property type="molecule type" value="mRNA"/>
</dbReference>
<dbReference type="RefSeq" id="NP_989993.1">
    <property type="nucleotide sequence ID" value="NM_204662.1"/>
</dbReference>
<dbReference type="RefSeq" id="XP_046779509.1">
    <property type="nucleotide sequence ID" value="XM_046923553.1"/>
</dbReference>
<dbReference type="RefSeq" id="XP_046779510.1">
    <property type="nucleotide sequence ID" value="XM_046923554.1"/>
</dbReference>
<dbReference type="RefSeq" id="XP_046779511.1">
    <property type="nucleotide sequence ID" value="XM_046923555.1"/>
</dbReference>
<dbReference type="RefSeq" id="XP_046779512.1">
    <property type="nucleotide sequence ID" value="XM_046923556.1"/>
</dbReference>
<dbReference type="RefSeq" id="XP_046779513.1">
    <property type="nucleotide sequence ID" value="XM_046923557.1"/>
</dbReference>
<dbReference type="RefSeq" id="XP_046779514.1">
    <property type="nucleotide sequence ID" value="XM_046923558.1"/>
</dbReference>
<dbReference type="RefSeq" id="XP_046779515.1">
    <property type="nucleotide sequence ID" value="XM_046923559.1"/>
</dbReference>
<dbReference type="RefSeq" id="XP_046779516.1">
    <property type="nucleotide sequence ID" value="XM_046923560.1"/>
</dbReference>
<dbReference type="STRING" id="9031.ENSGALP00000016812"/>
<dbReference type="GlyCosmos" id="Q9DDD1">
    <property type="glycosylation" value="3 sites, No reported glycans"/>
</dbReference>
<dbReference type="GlyGen" id="Q9DDD1">
    <property type="glycosylation" value="4 sites"/>
</dbReference>
<dbReference type="PaxDb" id="9031-ENSGALP00000016812"/>
<dbReference type="GeneID" id="395382"/>
<dbReference type="KEGG" id="gga:395382"/>
<dbReference type="CTD" id="344758"/>
<dbReference type="VEuPathDB" id="HostDB:geneid_395382"/>
<dbReference type="eggNOG" id="KOG0331">
    <property type="taxonomic scope" value="Eukaryota"/>
</dbReference>
<dbReference type="HOGENOM" id="CLU_021967_0_0_1"/>
<dbReference type="InParanoid" id="Q9DDD1"/>
<dbReference type="OrthoDB" id="9944911at2759"/>
<dbReference type="PhylomeDB" id="Q9DDD1"/>
<dbReference type="TreeFam" id="TF331679"/>
<dbReference type="PRO" id="PR:Q9DDD1"/>
<dbReference type="Proteomes" id="UP000000539">
    <property type="component" value="Chromosome 9"/>
</dbReference>
<dbReference type="Bgee" id="ENSGALG00000010337">
    <property type="expression patterns" value="Expressed in spermatocyte and 5 other cell types or tissues"/>
</dbReference>
<dbReference type="GO" id="GO:0043005">
    <property type="term" value="C:neuron projection"/>
    <property type="evidence" value="ECO:0000318"/>
    <property type="project" value="GO_Central"/>
</dbReference>
<dbReference type="GO" id="GO:0005886">
    <property type="term" value="C:plasma membrane"/>
    <property type="evidence" value="ECO:0000318"/>
    <property type="project" value="GO_Central"/>
</dbReference>
<dbReference type="GO" id="GO:0004930">
    <property type="term" value="F:G protein-coupled receptor activity"/>
    <property type="evidence" value="ECO:0000318"/>
    <property type="project" value="GO_Central"/>
</dbReference>
<dbReference type="GO" id="GO:0042923">
    <property type="term" value="F:neuropeptide binding"/>
    <property type="evidence" value="ECO:0000318"/>
    <property type="project" value="GO_Central"/>
</dbReference>
<dbReference type="GO" id="GO:0007218">
    <property type="term" value="P:neuropeptide signaling pathway"/>
    <property type="evidence" value="ECO:0000318"/>
    <property type="project" value="GO_Central"/>
</dbReference>
<dbReference type="CDD" id="cd15011">
    <property type="entry name" value="7tmA_GPR149"/>
    <property type="match status" value="1"/>
</dbReference>
<dbReference type="FunFam" id="1.20.1070.10:FF:000207">
    <property type="entry name" value="Probable G-protein coupled receptor 149"/>
    <property type="match status" value="1"/>
</dbReference>
<dbReference type="Gene3D" id="1.20.1070.10">
    <property type="entry name" value="Rhodopsin 7-helix transmembrane proteins"/>
    <property type="match status" value="1"/>
</dbReference>
<dbReference type="InterPro" id="IPR017452">
    <property type="entry name" value="GPCR_Rhodpsn_7TM"/>
</dbReference>
<dbReference type="PANTHER" id="PTHR24229:SF32">
    <property type="entry name" value="G-PROTEIN COUPLED RECEPTOR 149-RELATED"/>
    <property type="match status" value="1"/>
</dbReference>
<dbReference type="PANTHER" id="PTHR24229">
    <property type="entry name" value="NEUROPEPTIDES RECEPTOR"/>
    <property type="match status" value="1"/>
</dbReference>
<dbReference type="SUPFAM" id="SSF81321">
    <property type="entry name" value="Family A G protein-coupled receptor-like"/>
    <property type="match status" value="1"/>
</dbReference>
<dbReference type="PROSITE" id="PS50262">
    <property type="entry name" value="G_PROTEIN_RECEP_F1_2"/>
    <property type="match status" value="1"/>
</dbReference>
<feature type="chain" id="PRO_0000069629" description="Probable G-protein coupled receptor 149">
    <location>
        <begin position="1"/>
        <end position="723"/>
    </location>
</feature>
<feature type="topological domain" description="Extracellular" evidence="1">
    <location>
        <begin position="1"/>
        <end position="31"/>
    </location>
</feature>
<feature type="transmembrane region" description="Helical; Name=1" evidence="1">
    <location>
        <begin position="32"/>
        <end position="52"/>
    </location>
</feature>
<feature type="topological domain" description="Cytoplasmic" evidence="1">
    <location>
        <begin position="53"/>
        <end position="69"/>
    </location>
</feature>
<feature type="transmembrane region" description="Helical; Name=2" evidence="1">
    <location>
        <begin position="70"/>
        <end position="90"/>
    </location>
</feature>
<feature type="topological domain" description="Extracellular" evidence="1">
    <location>
        <begin position="91"/>
        <end position="106"/>
    </location>
</feature>
<feature type="transmembrane region" description="Helical; Name=3" evidence="1">
    <location>
        <begin position="107"/>
        <end position="127"/>
    </location>
</feature>
<feature type="topological domain" description="Cytoplasmic" evidence="1">
    <location>
        <begin position="128"/>
        <end position="148"/>
    </location>
</feature>
<feature type="transmembrane region" description="Helical; Name=4" evidence="1">
    <location>
        <begin position="149"/>
        <end position="169"/>
    </location>
</feature>
<feature type="topological domain" description="Extracellular" evidence="1">
    <location>
        <begin position="170"/>
        <end position="188"/>
    </location>
</feature>
<feature type="transmembrane region" description="Helical; Name=5" evidence="1">
    <location>
        <begin position="189"/>
        <end position="209"/>
    </location>
</feature>
<feature type="topological domain" description="Cytoplasmic" evidence="1">
    <location>
        <begin position="210"/>
        <end position="306"/>
    </location>
</feature>
<feature type="transmembrane region" description="Helical; Name=6" evidence="1">
    <location>
        <begin position="307"/>
        <end position="327"/>
    </location>
</feature>
<feature type="topological domain" description="Extracellular" evidence="1">
    <location>
        <begin position="328"/>
        <end position="338"/>
    </location>
</feature>
<feature type="transmembrane region" description="Helical; Name=7" evidence="1">
    <location>
        <begin position="339"/>
        <end position="359"/>
    </location>
</feature>
<feature type="topological domain" description="Cytoplasmic" evidence="1">
    <location>
        <begin position="360"/>
        <end position="723"/>
    </location>
</feature>
<feature type="region of interest" description="Disordered" evidence="3">
    <location>
        <begin position="451"/>
        <end position="513"/>
    </location>
</feature>
<feature type="compositionally biased region" description="Basic and acidic residues" evidence="3">
    <location>
        <begin position="501"/>
        <end position="513"/>
    </location>
</feature>
<feature type="glycosylation site" description="N-linked (GlcNAc...) asparagine" evidence="1">
    <location>
        <position position="7"/>
    </location>
</feature>
<feature type="glycosylation site" description="N-linked (GlcNAc...) asparagine" evidence="1">
    <location>
        <position position="11"/>
    </location>
</feature>
<feature type="glycosylation site" description="N-linked (GlcNAc...) asparagine" evidence="1">
    <location>
        <position position="19"/>
    </location>
</feature>
<feature type="disulfide bond" evidence="2">
    <location>
        <begin position="103"/>
        <end position="181"/>
    </location>
</feature>
<sequence length="723" mass="79664">MSVMPSNLSLNGTSFFAENHSIMDKPNEQRTLNVFLFCSTFIIAFTVLLGSIYSLVSLLKLQNKSTISMIVTSLSIDDLISIVPVIIFMLTQWSSDALPQPLCTTSALIYLFQGISSNLKGSLIVSYNFYSINKTETMNCSASKRRVSMVWAILSIWIVSLLICILPLCGWGKYIPTTWGCFTDHASSYILFLFIVYSLCFCLLTVLSVPLTYQLLCSDEQQLLHVNYQEISRGYITPGTPAGCSTATPCLSPVDPVDKTLKHFQNACLSSKAVFRKGVAESSGLEPRCMNNAKSRSFTVGFAQKRFSLILALTKVILWLPMMIQMVVQHITGYQSFSFETLSFLLTLLAATVTPVFVLSEHWIHLPCGCIINCRRNSYAVSSEELKTKHRGFEFNLSFQHGYGIYRISPESHHHDGDGKSTSCHNLLVCEKPYEPPRGGGGGAALAELSTTDSARPGPAGLSATDSARPGPAGFSTTDSARPSAAGVRGEAASGLGRTVEGPERRLSHEEGHKPELTDWEWCRSKSERTPRQRSGGALAIPLCAFQGTVSLQAPTGKTLSLSTYEVSTEGQKITPTSKKIEVYRSKSVGHDPNPEECPNTFADTSVKIHLEVLEICDNEEALDTVSIISNISQSSTQVRSPSLRYSRKENRFVSCDLGETASYSLFIPSNNPDSDINITIPDTVEAHRQNSKKQHMERGGYQEEIQMLNKAYRKREEDGNSN</sequence>